<comment type="function">
    <text evidence="1">Major component of the type IV fimbriae that plays an essential role in twitching motility, natural transformation, and protease secretion.</text>
</comment>
<comment type="subunit">
    <text>The pili are polar flexible filaments of about 5.4 nanometers diameter and 2.5 micrometers average length; they consist of only a single polypeptide chain arranged in a helical configuration of five subunits per turn in the assembled pilus.</text>
</comment>
<comment type="subcellular location">
    <subcellularLocation>
        <location evidence="1">Fimbrium</location>
    </subcellularLocation>
    <subcellularLocation>
        <location evidence="3">Membrane</location>
        <topology evidence="3">Single-pass membrane protein</topology>
    </subcellularLocation>
</comment>
<comment type="similarity">
    <text evidence="5">Belongs to the N-Me-Phe pilin family.</text>
</comment>
<protein>
    <recommendedName>
        <fullName>Type IV major fimbrial protein FimA</fullName>
    </recommendedName>
    <alternativeName>
        <fullName>Pilin</fullName>
    </alternativeName>
    <alternativeName>
        <fullName>Serogroup B1/VCS1006</fullName>
    </alternativeName>
</protein>
<name>FMAB_DICNO</name>
<proteinExistence type="inferred from homology"/>
<sequence>MKSLQKGFTLIELMIVVAIIGILAAFAIPAYNDYIARSQAAEGVSLADGLKVRIAENLQDGECKGPDANTASGVVGNEDKGKYGLAKIDGEYDASKTEAGDPNGCKVEITYGQGTAGDKISKLITGKKLVLDQLVNGSFIAGDGTDLADKFIPNAVKAKK</sequence>
<feature type="propeptide" id="PRO_0000024113" description="Leader sequence" evidence="4">
    <location>
        <begin position="1"/>
        <end position="7"/>
    </location>
</feature>
<feature type="chain" id="PRO_0000024114" description="Type IV major fimbrial protein FimA">
    <location>
        <begin position="8"/>
        <end position="160"/>
    </location>
</feature>
<feature type="transmembrane region" description="Helical" evidence="3">
    <location>
        <begin position="8"/>
        <end position="28"/>
    </location>
</feature>
<feature type="modified residue" description="N-methylphenylalanine" evidence="4">
    <location>
        <position position="8"/>
    </location>
</feature>
<feature type="disulfide bond" evidence="2">
    <location>
        <begin position="63"/>
        <end position="105"/>
    </location>
</feature>
<reference key="1">
    <citation type="journal article" date="1991" name="Mol. Microbiol.">
        <title>Gene sequences and comparison of the fimbrial subunits representative of Bacteroides nodosus serotypes A to I: class I and class II strains.</title>
        <authorList>
            <person name="Mattick J.S."/>
            <person name="Anderson B.J."/>
            <person name="Cox P.T."/>
            <person name="Dalrymple B.P."/>
            <person name="Bills M.M."/>
            <person name="Hobbs M."/>
            <person name="Egerton J.R."/>
        </authorList>
    </citation>
    <scope>NUCLEOTIDE SEQUENCE [GENOMIC DNA]</scope>
    <source>
        <strain>Serogroup B1 isolate VCS1006</strain>
    </source>
</reference>
<organism>
    <name type="scientific">Dichelobacter nodosus</name>
    <name type="common">Bacteroides nodosus</name>
    <dbReference type="NCBI Taxonomy" id="870"/>
    <lineage>
        <taxon>Bacteria</taxon>
        <taxon>Pseudomonadati</taxon>
        <taxon>Pseudomonadota</taxon>
        <taxon>Gammaproteobacteria</taxon>
        <taxon>Cardiobacteriales</taxon>
        <taxon>Cardiobacteriaceae</taxon>
        <taxon>Dichelobacter</taxon>
    </lineage>
</organism>
<accession>P17822</accession>
<gene>
    <name type="primary">fimA</name>
</gene>
<dbReference type="EMBL" id="X52404">
    <property type="protein sequence ID" value="CAA36650.1"/>
    <property type="molecule type" value="Genomic_DNA"/>
</dbReference>
<dbReference type="PIR" id="S15259">
    <property type="entry name" value="S15259"/>
</dbReference>
<dbReference type="SMR" id="P17822"/>
<dbReference type="GO" id="GO:0016020">
    <property type="term" value="C:membrane"/>
    <property type="evidence" value="ECO:0007669"/>
    <property type="project" value="UniProtKB-SubCell"/>
</dbReference>
<dbReference type="GO" id="GO:0009289">
    <property type="term" value="C:pilus"/>
    <property type="evidence" value="ECO:0007669"/>
    <property type="project" value="UniProtKB-SubCell"/>
</dbReference>
<dbReference type="GO" id="GO:0007155">
    <property type="term" value="P:cell adhesion"/>
    <property type="evidence" value="ECO:0007669"/>
    <property type="project" value="InterPro"/>
</dbReference>
<dbReference type="Gene3D" id="3.30.700.10">
    <property type="entry name" value="Glycoprotein, Type 4 Pilin"/>
    <property type="match status" value="1"/>
</dbReference>
<dbReference type="InterPro" id="IPR012902">
    <property type="entry name" value="N_methyl_site"/>
</dbReference>
<dbReference type="InterPro" id="IPR001082">
    <property type="entry name" value="Pilin"/>
</dbReference>
<dbReference type="InterPro" id="IPR045584">
    <property type="entry name" value="Pilin-like"/>
</dbReference>
<dbReference type="InterPro" id="IPR050470">
    <property type="entry name" value="T4P/T2SS_Core"/>
</dbReference>
<dbReference type="NCBIfam" id="TIGR02532">
    <property type="entry name" value="IV_pilin_GFxxxE"/>
    <property type="match status" value="1"/>
</dbReference>
<dbReference type="PANTHER" id="PTHR30093">
    <property type="entry name" value="GENERAL SECRETION PATHWAY PROTEIN G"/>
    <property type="match status" value="1"/>
</dbReference>
<dbReference type="PANTHER" id="PTHR30093:SF34">
    <property type="entry name" value="PREPILIN PEPTIDASE-DEPENDENT PROTEIN D"/>
    <property type="match status" value="1"/>
</dbReference>
<dbReference type="Pfam" id="PF07963">
    <property type="entry name" value="N_methyl"/>
    <property type="match status" value="1"/>
</dbReference>
<dbReference type="Pfam" id="PF00114">
    <property type="entry name" value="Pilin"/>
    <property type="match status" value="1"/>
</dbReference>
<dbReference type="SUPFAM" id="SSF54523">
    <property type="entry name" value="Pili subunits"/>
    <property type="match status" value="1"/>
</dbReference>
<dbReference type="PROSITE" id="PS00409">
    <property type="entry name" value="PROKAR_NTER_METHYL"/>
    <property type="match status" value="1"/>
</dbReference>
<keyword id="KW-1015">Disulfide bond</keyword>
<keyword id="KW-0281">Fimbrium</keyword>
<keyword id="KW-0472">Membrane</keyword>
<keyword id="KW-0488">Methylation</keyword>
<keyword id="KW-0812">Transmembrane</keyword>
<keyword id="KW-1133">Transmembrane helix</keyword>
<evidence type="ECO:0000250" key="1">
    <source>
        <dbReference type="UniProtKB" id="A5EWR9"/>
    </source>
</evidence>
<evidence type="ECO:0000250" key="2">
    <source>
        <dbReference type="UniProtKB" id="P02975"/>
    </source>
</evidence>
<evidence type="ECO:0000255" key="3"/>
<evidence type="ECO:0000255" key="4">
    <source>
        <dbReference type="PROSITE-ProRule" id="PRU01070"/>
    </source>
</evidence>
<evidence type="ECO:0000305" key="5"/>